<dbReference type="EC" id="2.7.7.6" evidence="1"/>
<dbReference type="EMBL" id="CP001037">
    <property type="protein sequence ID" value="ACC83330.1"/>
    <property type="molecule type" value="Genomic_DNA"/>
</dbReference>
<dbReference type="RefSeq" id="WP_012411285.1">
    <property type="nucleotide sequence ID" value="NC_010628.1"/>
</dbReference>
<dbReference type="SMR" id="B2J199"/>
<dbReference type="STRING" id="63737.Npun_F4986"/>
<dbReference type="EnsemblBacteria" id="ACC83330">
    <property type="protein sequence ID" value="ACC83330"/>
    <property type="gene ID" value="Npun_F4986"/>
</dbReference>
<dbReference type="KEGG" id="npu:Npun_F4986"/>
<dbReference type="eggNOG" id="COG0086">
    <property type="taxonomic scope" value="Bacteria"/>
</dbReference>
<dbReference type="HOGENOM" id="CLU_030022_2_0_3"/>
<dbReference type="OrthoDB" id="9815296at2"/>
<dbReference type="PhylomeDB" id="B2J199"/>
<dbReference type="Proteomes" id="UP000001191">
    <property type="component" value="Chromosome"/>
</dbReference>
<dbReference type="GO" id="GO:0000428">
    <property type="term" value="C:DNA-directed RNA polymerase complex"/>
    <property type="evidence" value="ECO:0007669"/>
    <property type="project" value="UniProtKB-KW"/>
</dbReference>
<dbReference type="GO" id="GO:0003677">
    <property type="term" value="F:DNA binding"/>
    <property type="evidence" value="ECO:0007669"/>
    <property type="project" value="UniProtKB-UniRule"/>
</dbReference>
<dbReference type="GO" id="GO:0003899">
    <property type="term" value="F:DNA-directed RNA polymerase activity"/>
    <property type="evidence" value="ECO:0007669"/>
    <property type="project" value="UniProtKB-UniRule"/>
</dbReference>
<dbReference type="GO" id="GO:0000287">
    <property type="term" value="F:magnesium ion binding"/>
    <property type="evidence" value="ECO:0007669"/>
    <property type="project" value="UniProtKB-UniRule"/>
</dbReference>
<dbReference type="GO" id="GO:0008270">
    <property type="term" value="F:zinc ion binding"/>
    <property type="evidence" value="ECO:0007669"/>
    <property type="project" value="UniProtKB-UniRule"/>
</dbReference>
<dbReference type="GO" id="GO:0006351">
    <property type="term" value="P:DNA-templated transcription"/>
    <property type="evidence" value="ECO:0007669"/>
    <property type="project" value="UniProtKB-UniRule"/>
</dbReference>
<dbReference type="Gene3D" id="1.10.40.90">
    <property type="match status" value="1"/>
</dbReference>
<dbReference type="Gene3D" id="2.40.40.20">
    <property type="match status" value="1"/>
</dbReference>
<dbReference type="Gene3D" id="4.10.860.120">
    <property type="entry name" value="RNA polymerase II, clamp domain"/>
    <property type="match status" value="1"/>
</dbReference>
<dbReference type="Gene3D" id="1.10.274.100">
    <property type="entry name" value="RNA polymerase Rpb1, domain 3"/>
    <property type="match status" value="1"/>
</dbReference>
<dbReference type="HAMAP" id="MF_01323">
    <property type="entry name" value="RNApol_bact_RpoC1"/>
    <property type="match status" value="1"/>
</dbReference>
<dbReference type="InterPro" id="IPR012755">
    <property type="entry name" value="DNA-dir_RpoC1_gamma"/>
</dbReference>
<dbReference type="InterPro" id="IPR045867">
    <property type="entry name" value="DNA-dir_RpoC_beta_prime"/>
</dbReference>
<dbReference type="InterPro" id="IPR000722">
    <property type="entry name" value="RNA_pol_asu"/>
</dbReference>
<dbReference type="InterPro" id="IPR006592">
    <property type="entry name" value="RNA_pol_N"/>
</dbReference>
<dbReference type="InterPro" id="IPR007080">
    <property type="entry name" value="RNA_pol_Rpb1_1"/>
</dbReference>
<dbReference type="InterPro" id="IPR007066">
    <property type="entry name" value="RNA_pol_Rpb1_3"/>
</dbReference>
<dbReference type="InterPro" id="IPR042102">
    <property type="entry name" value="RNA_pol_Rpb1_3_sf"/>
</dbReference>
<dbReference type="InterPro" id="IPR044893">
    <property type="entry name" value="RNA_pol_Rpb1_clamp_domain"/>
</dbReference>
<dbReference type="InterPro" id="IPR034678">
    <property type="entry name" value="RNApol_RpoC1"/>
</dbReference>
<dbReference type="NCBIfam" id="NF002729">
    <property type="entry name" value="PRK02625.1"/>
    <property type="match status" value="1"/>
</dbReference>
<dbReference type="NCBIfam" id="TIGR02387">
    <property type="entry name" value="rpoC1_cyan"/>
    <property type="match status" value="1"/>
</dbReference>
<dbReference type="PANTHER" id="PTHR19376">
    <property type="entry name" value="DNA-DIRECTED RNA POLYMERASE"/>
    <property type="match status" value="1"/>
</dbReference>
<dbReference type="PANTHER" id="PTHR19376:SF54">
    <property type="entry name" value="DNA-DIRECTED RNA POLYMERASE SUBUNIT BETA"/>
    <property type="match status" value="1"/>
</dbReference>
<dbReference type="Pfam" id="PF04997">
    <property type="entry name" value="RNA_pol_Rpb1_1"/>
    <property type="match status" value="1"/>
</dbReference>
<dbReference type="Pfam" id="PF00623">
    <property type="entry name" value="RNA_pol_Rpb1_2"/>
    <property type="match status" value="2"/>
</dbReference>
<dbReference type="Pfam" id="PF04983">
    <property type="entry name" value="RNA_pol_Rpb1_3"/>
    <property type="match status" value="1"/>
</dbReference>
<dbReference type="SMART" id="SM00663">
    <property type="entry name" value="RPOLA_N"/>
    <property type="match status" value="1"/>
</dbReference>
<dbReference type="SUPFAM" id="SSF64484">
    <property type="entry name" value="beta and beta-prime subunits of DNA dependent RNA-polymerase"/>
    <property type="match status" value="1"/>
</dbReference>
<comment type="function">
    <text evidence="1">DNA-dependent RNA polymerase catalyzes the transcription of DNA into RNA using the four ribonucleoside triphosphates as substrates.</text>
</comment>
<comment type="catalytic activity">
    <reaction evidence="1">
        <text>RNA(n) + a ribonucleoside 5'-triphosphate = RNA(n+1) + diphosphate</text>
        <dbReference type="Rhea" id="RHEA:21248"/>
        <dbReference type="Rhea" id="RHEA-COMP:14527"/>
        <dbReference type="Rhea" id="RHEA-COMP:17342"/>
        <dbReference type="ChEBI" id="CHEBI:33019"/>
        <dbReference type="ChEBI" id="CHEBI:61557"/>
        <dbReference type="ChEBI" id="CHEBI:140395"/>
        <dbReference type="EC" id="2.7.7.6"/>
    </reaction>
</comment>
<comment type="cofactor">
    <cofactor evidence="1">
        <name>Mg(2+)</name>
        <dbReference type="ChEBI" id="CHEBI:18420"/>
    </cofactor>
    <text evidence="1">Binds 1 Mg(2+) ion per subunit.</text>
</comment>
<comment type="cofactor">
    <cofactor evidence="1">
        <name>Zn(2+)</name>
        <dbReference type="ChEBI" id="CHEBI:29105"/>
    </cofactor>
    <text evidence="1">Binds 1 Zn(2+) ion per subunit.</text>
</comment>
<comment type="subunit">
    <text evidence="1">In cyanobacteria the RNAP catalytic core is composed of 2 alpha, 1 beta, 1 beta', 1 gamma and 1 omega subunit. When a sigma factor is associated with the core the holoenzyme is formed, which can initiate transcription.</text>
</comment>
<comment type="similarity">
    <text evidence="1">Belongs to the RNA polymerase beta' chain family. RpoC1 subfamily.</text>
</comment>
<keyword id="KW-0240">DNA-directed RNA polymerase</keyword>
<keyword id="KW-0460">Magnesium</keyword>
<keyword id="KW-0479">Metal-binding</keyword>
<keyword id="KW-0548">Nucleotidyltransferase</keyword>
<keyword id="KW-1185">Reference proteome</keyword>
<keyword id="KW-0804">Transcription</keyword>
<keyword id="KW-0808">Transferase</keyword>
<keyword id="KW-0862">Zinc</keyword>
<protein>
    <recommendedName>
        <fullName evidence="1">DNA-directed RNA polymerase subunit gamma</fullName>
        <shortName evidence="1">RNAP subunit gamma</shortName>
        <ecNumber evidence="1">2.7.7.6</ecNumber>
    </recommendedName>
    <alternativeName>
        <fullName evidence="1">RNA polymerase subunit gamma</fullName>
    </alternativeName>
    <alternativeName>
        <fullName evidence="1">Transcriptase subunit gamma</fullName>
    </alternativeName>
</protein>
<sequence length="625" mass="70588">MRPAQTNQFDYVKIGLASPERIRQWGERTLPNGQVVGEVTKPETINYRTLKPEMDGLFCERIFGPAKDWECHCGKYKRVRHRGIVCERCGVEVTESRVRRHRMGYIKLAAPVAHVWYLKGIPSYISILLDMPLRDVEQIVYFNSYVVLSPGNAETLTYKQLLSEDQWLEIEDQIYSEDSVLQGVEVGIGAEALLRLLADINLEQEAESLREEIGNAKGQKRAKLIKRLRVIDNFIATGSKPEWMVMAVIPVIPPDLRPMVQLDGGRFATSDLNDLYRRVINRNNRLARLQEILAPEIIVRNEKRMLQEAVDALIDNGRRGRTVVGANNRPLKSLSDIIEGKQGRFRQNLLGKRVDYSGRSVIVVGPKLKIHQCGLPREMAIELFQPFVINRLIRSGMVNNIKAAKKLISRNDPSVWDVLEEVIEGHPVMLNRAPTLHRLGIQSFEPILVEGRAIQLHPLVCPAFNADFDGDQMAVHVPLSLESQAEARLLMLASNNILSPATGKPIITPSQDMVLGAYYLTAENPGATKGAGNYFSSLEDVIMAFQQDQIDLHAYIYVRFDGEIESDQPDTEPVKVTENEDGTRTLLYKFRRVRQDAKGNVLSQYIYTTPGRVIYNNAIQEALAS</sequence>
<feature type="chain" id="PRO_1000141805" description="DNA-directed RNA polymerase subunit gamma">
    <location>
        <begin position="1"/>
        <end position="625"/>
    </location>
</feature>
<feature type="binding site" evidence="1">
    <location>
        <position position="71"/>
    </location>
    <ligand>
        <name>Zn(2+)</name>
        <dbReference type="ChEBI" id="CHEBI:29105"/>
    </ligand>
</feature>
<feature type="binding site" evidence="1">
    <location>
        <position position="73"/>
    </location>
    <ligand>
        <name>Zn(2+)</name>
        <dbReference type="ChEBI" id="CHEBI:29105"/>
    </ligand>
</feature>
<feature type="binding site" evidence="1">
    <location>
        <position position="86"/>
    </location>
    <ligand>
        <name>Zn(2+)</name>
        <dbReference type="ChEBI" id="CHEBI:29105"/>
    </ligand>
</feature>
<feature type="binding site" evidence="1">
    <location>
        <position position="89"/>
    </location>
    <ligand>
        <name>Zn(2+)</name>
        <dbReference type="ChEBI" id="CHEBI:29105"/>
    </ligand>
</feature>
<feature type="binding site" evidence="1">
    <location>
        <position position="467"/>
    </location>
    <ligand>
        <name>Mg(2+)</name>
        <dbReference type="ChEBI" id="CHEBI:18420"/>
    </ligand>
</feature>
<feature type="binding site" evidence="1">
    <location>
        <position position="469"/>
    </location>
    <ligand>
        <name>Mg(2+)</name>
        <dbReference type="ChEBI" id="CHEBI:18420"/>
    </ligand>
</feature>
<feature type="binding site" evidence="1">
    <location>
        <position position="471"/>
    </location>
    <ligand>
        <name>Mg(2+)</name>
        <dbReference type="ChEBI" id="CHEBI:18420"/>
    </ligand>
</feature>
<accession>B2J199</accession>
<name>RPOC1_NOSP7</name>
<proteinExistence type="inferred from homology"/>
<organism>
    <name type="scientific">Nostoc punctiforme (strain ATCC 29133 / PCC 73102)</name>
    <dbReference type="NCBI Taxonomy" id="63737"/>
    <lineage>
        <taxon>Bacteria</taxon>
        <taxon>Bacillati</taxon>
        <taxon>Cyanobacteriota</taxon>
        <taxon>Cyanophyceae</taxon>
        <taxon>Nostocales</taxon>
        <taxon>Nostocaceae</taxon>
        <taxon>Nostoc</taxon>
    </lineage>
</organism>
<evidence type="ECO:0000255" key="1">
    <source>
        <dbReference type="HAMAP-Rule" id="MF_01323"/>
    </source>
</evidence>
<reference key="1">
    <citation type="journal article" date="2013" name="Plant Physiol.">
        <title>A Nostoc punctiforme Sugar Transporter Necessary to Establish a Cyanobacterium-Plant Symbiosis.</title>
        <authorList>
            <person name="Ekman M."/>
            <person name="Picossi S."/>
            <person name="Campbell E.L."/>
            <person name="Meeks J.C."/>
            <person name="Flores E."/>
        </authorList>
    </citation>
    <scope>NUCLEOTIDE SEQUENCE [LARGE SCALE GENOMIC DNA]</scope>
    <source>
        <strain>ATCC 29133 / PCC 73102</strain>
    </source>
</reference>
<gene>
    <name evidence="1" type="primary">rpoC1</name>
    <name type="ordered locus">Npun_F4986</name>
</gene>